<feature type="signal peptide" evidence="1">
    <location>
        <begin position="1"/>
        <end position="22"/>
    </location>
</feature>
<feature type="chain" id="PRO_0000018745" description="Uncharacterized lipoprotein MPN_592">
    <location>
        <begin position="23"/>
        <end position="521"/>
    </location>
</feature>
<feature type="lipid moiety-binding region" description="N-palmitoyl cysteine" evidence="1">
    <location>
        <position position="23"/>
    </location>
</feature>
<feature type="lipid moiety-binding region" description="S-diacylglycerol cysteine" evidence="1">
    <location>
        <position position="23"/>
    </location>
</feature>
<organism>
    <name type="scientific">Mycoplasma pneumoniae (strain ATCC 29342 / M129 / Subtype 1)</name>
    <name type="common">Mycoplasmoides pneumoniae</name>
    <dbReference type="NCBI Taxonomy" id="272634"/>
    <lineage>
        <taxon>Bacteria</taxon>
        <taxon>Bacillati</taxon>
        <taxon>Mycoplasmatota</taxon>
        <taxon>Mycoplasmoidales</taxon>
        <taxon>Mycoplasmoidaceae</taxon>
        <taxon>Mycoplasmoides</taxon>
    </lineage>
</organism>
<name>Y592_MYCPN</name>
<proteinExistence type="inferred from homology"/>
<gene>
    <name type="ordered locus">MPN_592</name>
    <name type="ORF">D02_orf521</name>
    <name type="ORF">MP250</name>
</gene>
<dbReference type="EMBL" id="U43738">
    <property type="protein sequence ID" value="AAC43664.1"/>
    <property type="molecule type" value="Genomic_DNA"/>
</dbReference>
<dbReference type="EMBL" id="U00089">
    <property type="protein sequence ID" value="AAB95898.1"/>
    <property type="molecule type" value="Genomic_DNA"/>
</dbReference>
<dbReference type="PIR" id="S62794">
    <property type="entry name" value="S62794"/>
</dbReference>
<dbReference type="RefSeq" id="NP_110281.1">
    <property type="nucleotide sequence ID" value="NC_000912.1"/>
</dbReference>
<dbReference type="RefSeq" id="WP_010874949.1">
    <property type="nucleotide sequence ID" value="NZ_OU342337.1"/>
</dbReference>
<dbReference type="SMR" id="Q50335"/>
<dbReference type="IntAct" id="Q50335">
    <property type="interactions" value="1"/>
</dbReference>
<dbReference type="STRING" id="272634.MPN_592"/>
<dbReference type="EnsemblBacteria" id="AAB95898">
    <property type="protein sequence ID" value="AAB95898"/>
    <property type="gene ID" value="MPN_592"/>
</dbReference>
<dbReference type="KEGG" id="mpn:MPN_592"/>
<dbReference type="PATRIC" id="fig|272634.6.peg.655"/>
<dbReference type="HOGENOM" id="CLU_038569_1_0_14"/>
<dbReference type="OrthoDB" id="395427at2"/>
<dbReference type="BioCyc" id="MPNE272634:G1GJ3-964-MONOMER"/>
<dbReference type="Proteomes" id="UP000000808">
    <property type="component" value="Chromosome"/>
</dbReference>
<dbReference type="GO" id="GO:0005886">
    <property type="term" value="C:plasma membrane"/>
    <property type="evidence" value="ECO:0007669"/>
    <property type="project" value="UniProtKB-SubCell"/>
</dbReference>
<dbReference type="InterPro" id="IPR022382">
    <property type="entry name" value="Mycoplasma_peptidase_DUF31"/>
</dbReference>
<dbReference type="InterPro" id="IPR009003">
    <property type="entry name" value="Peptidase_S1_PA"/>
</dbReference>
<dbReference type="InterPro" id="IPR022381">
    <property type="entry name" value="Uncharacterised_MG067"/>
</dbReference>
<dbReference type="Pfam" id="PF01732">
    <property type="entry name" value="Mycop_pep_DUF31"/>
    <property type="match status" value="1"/>
</dbReference>
<dbReference type="PRINTS" id="PR00840">
    <property type="entry name" value="Y06768FAMILY"/>
</dbReference>
<dbReference type="SUPFAM" id="SSF50494">
    <property type="entry name" value="Trypsin-like serine proteases"/>
    <property type="match status" value="1"/>
</dbReference>
<dbReference type="PROSITE" id="PS51257">
    <property type="entry name" value="PROKAR_LIPOPROTEIN"/>
    <property type="match status" value="1"/>
</dbReference>
<accession>Q50335</accession>
<keyword id="KW-1003">Cell membrane</keyword>
<keyword id="KW-0449">Lipoprotein</keyword>
<keyword id="KW-0472">Membrane</keyword>
<keyword id="KW-0564">Palmitate</keyword>
<keyword id="KW-1185">Reference proteome</keyword>
<keyword id="KW-0732">Signal</keyword>
<reference key="1">
    <citation type="journal article" date="1996" name="Nucleic Acids Res.">
        <title>Sequence analysis of 56 kb from the genome of the bacterium Mycoplasma pneumoniae comprising the dnaA region, the atp operon and a cluster of ribosomal protein genes.</title>
        <authorList>
            <person name="Hilbert H."/>
            <person name="Himmelreich R."/>
            <person name="Plagens H."/>
            <person name="Herrmann R."/>
        </authorList>
    </citation>
    <scope>NUCLEOTIDE SEQUENCE [GENOMIC DNA]</scope>
    <source>
        <strain>ATCC 29342 / M129 / Subtype 1</strain>
    </source>
</reference>
<reference key="2">
    <citation type="journal article" date="1996" name="Nucleic Acids Res.">
        <title>Complete sequence analysis of the genome of the bacterium Mycoplasma pneumoniae.</title>
        <authorList>
            <person name="Himmelreich R."/>
            <person name="Hilbert H."/>
            <person name="Plagens H."/>
            <person name="Pirkl E."/>
            <person name="Li B.-C."/>
            <person name="Herrmann R."/>
        </authorList>
    </citation>
    <scope>NUCLEOTIDE SEQUENCE [LARGE SCALE GENOMIC DNA]</scope>
    <source>
        <strain>ATCC 29342 / M129 / Subtype 1</strain>
    </source>
</reference>
<comment type="subcellular location">
    <subcellularLocation>
        <location evidence="1">Cell membrane</location>
        <topology evidence="1">Lipid-anchor</topology>
    </subcellularLocation>
</comment>
<comment type="similarity">
    <text evidence="2">Belongs to the MG067/MG068/MG395 family.</text>
</comment>
<protein>
    <recommendedName>
        <fullName>Uncharacterized lipoprotein MPN_592</fullName>
    </recommendedName>
</protein>
<sequence length="521" mass="59501">MGFKLKGFGFLTLFASQAFLTACSATLTVANTNHKNESDKFVIFEPQPPLSQTIPKPEAEPVIEPDAVATPPVQNAEVQIKPDSSKGVYSPGFKFNTNFIPKVNTKYRPGYDLSFALKFGTSWKEAYGTGWLIDWKDVKQDNKFTAYLATNLHVADSLRNKDDYKPYNKDGNQKEFLPGDITTEFSLGKYIDAQTVQKLTPEYQNLKHLNNRNSDALVSIQTSKLPKTAYTATDFIKTAQYKYNHIVSNTVYELDLFQNAVSYADFAVLELELNLANNRDQQIFDSFINPAVTAYEKLGNSLGLFSNLQLDQYVDDTHYLLGYPLLKREKTSYWNLPQKGYSSPLYENSNKEVSRITRNIRKDDEIPGSRLVQNQINYLPFAQNDPKGVMDFSKYLNYVFNYHEKQYQHHGYGLLLEDTDFPGGSSGSPLFNQNKQINSIYFAALPSKSYGVSQILRATQNKDKSKNYDLIFGDSNTKKYYAQFAKEHKTHLYHQILQSNDEQFRFVENDQTVTSQTPFKS</sequence>
<evidence type="ECO:0000255" key="1">
    <source>
        <dbReference type="PROSITE-ProRule" id="PRU00303"/>
    </source>
</evidence>
<evidence type="ECO:0000305" key="2"/>